<dbReference type="EMBL" id="Z11165">
    <property type="protein sequence ID" value="CAA77556.1"/>
    <property type="molecule type" value="Genomic_DNA"/>
</dbReference>
<dbReference type="EMBL" id="K01183">
    <property type="status" value="NOT_ANNOTATED_CDS"/>
    <property type="molecule type" value="Genomic_DNA"/>
</dbReference>
<dbReference type="PIR" id="F28771">
    <property type="entry name" value="F28771"/>
</dbReference>
<dbReference type="PDB" id="7YML">
    <property type="method" value="EM"/>
    <property type="resolution" value="2.60 A"/>
    <property type="chains" value="X=1-78"/>
</dbReference>
<dbReference type="PDB" id="8B64">
    <property type="method" value="EM"/>
    <property type="resolution" value="2.59 A"/>
    <property type="chains" value="X=1-78"/>
</dbReference>
<dbReference type="PDBsum" id="7YML"/>
<dbReference type="PDBsum" id="8B64"/>
<dbReference type="EMDB" id="EMD-15862"/>
<dbReference type="SMR" id="P26240"/>
<dbReference type="GO" id="GO:0005886">
    <property type="term" value="C:plasma membrane"/>
    <property type="evidence" value="ECO:0007669"/>
    <property type="project" value="UniProtKB-SubCell"/>
</dbReference>
<dbReference type="GO" id="GO:0015979">
    <property type="term" value="P:photosynthesis"/>
    <property type="evidence" value="ECO:0007669"/>
    <property type="project" value="UniProtKB-KW"/>
</dbReference>
<dbReference type="InterPro" id="IPR020169">
    <property type="entry name" value="Intrinsic_membrane_PufX"/>
</dbReference>
<dbReference type="Pfam" id="PF11511">
    <property type="entry name" value="RhodobacterPufX"/>
    <property type="match status" value="1"/>
</dbReference>
<accession>P26240</accession>
<proteinExistence type="evidence at protein level"/>
<feature type="chain" id="PRO_0000097104" description="Intrinsic membrane protein PufX">
    <location>
        <begin position="1"/>
        <end position="78"/>
    </location>
</feature>
<feature type="strand" evidence="2">
    <location>
        <begin position="10"/>
        <end position="12"/>
    </location>
</feature>
<feature type="helix" evidence="3">
    <location>
        <begin position="15"/>
        <end position="52"/>
    </location>
</feature>
<feature type="helix" evidence="3">
    <location>
        <begin position="56"/>
        <end position="59"/>
    </location>
</feature>
<organism>
    <name type="scientific">Rhodobacter capsulatus</name>
    <name type="common">Rhodopseudomonas capsulata</name>
    <dbReference type="NCBI Taxonomy" id="1061"/>
    <lineage>
        <taxon>Bacteria</taxon>
        <taxon>Pseudomonadati</taxon>
        <taxon>Pseudomonadota</taxon>
        <taxon>Alphaproteobacteria</taxon>
        <taxon>Rhodobacterales</taxon>
        <taxon>Rhodobacter group</taxon>
        <taxon>Rhodobacter</taxon>
    </lineage>
</organism>
<reference key="1">
    <citation type="journal article" date="1984" name="Cell">
        <title>Nucleotide and deduced polypeptide sequences of the photosynthetic reaction-center, B870 antenna, and flanking polypeptides from R. capsulata.</title>
        <authorList>
            <person name="Youvan D.C."/>
            <person name="Bylina E.J."/>
            <person name="Alberti M."/>
            <person name="Begusch H."/>
            <person name="Hearst J.E."/>
        </authorList>
    </citation>
    <scope>NUCLEOTIDE SEQUENCE [GENOMIC DNA]</scope>
</reference>
<comment type="function">
    <text>Associated with the reaction center - light-harvesting complex I. May play a critical role in facilitating the interaction between this complex and other components required for light-driven cyclic electron transfer.</text>
</comment>
<comment type="subcellular location">
    <subcellularLocation>
        <location>Cell membrane</location>
    </subcellularLocation>
</comment>
<comment type="similarity">
    <text evidence="1">Belongs to the PufX family.</text>
</comment>
<protein>
    <recommendedName>
        <fullName>Intrinsic membrane protein PufX</fullName>
    </recommendedName>
    <alternativeName>
        <fullName>Protein C2397</fullName>
    </alternativeName>
</protein>
<gene>
    <name type="primary">pufX</name>
</gene>
<evidence type="ECO:0000305" key="1"/>
<evidence type="ECO:0007829" key="2">
    <source>
        <dbReference type="PDB" id="7YML"/>
    </source>
</evidence>
<evidence type="ECO:0007829" key="3">
    <source>
        <dbReference type="PDB" id="8B64"/>
    </source>
</evidence>
<keyword id="KW-0002">3D-structure</keyword>
<keyword id="KW-1003">Cell membrane</keyword>
<keyword id="KW-0472">Membrane</keyword>
<keyword id="KW-0602">Photosynthesis</keyword>
<sequence length="78" mass="8569">MSMFDKPFDYENGSKFEMGIWIGRQMAYGAFLGSIPFLLGLGLVLGSYGLGLMLPERAHQAPSPYTTEVVVQHATEVV</sequence>
<name>PUFX_RHOCA</name>